<reference key="1">
    <citation type="journal article" date="2004" name="Proc. Natl. Acad. Sci. U.S.A.">
        <title>The diploid genome sequence of Candida albicans.</title>
        <authorList>
            <person name="Jones T."/>
            <person name="Federspiel N.A."/>
            <person name="Chibana H."/>
            <person name="Dungan J."/>
            <person name="Kalman S."/>
            <person name="Magee B.B."/>
            <person name="Newport G."/>
            <person name="Thorstenson Y.R."/>
            <person name="Agabian N."/>
            <person name="Magee P.T."/>
            <person name="Davis R.W."/>
            <person name="Scherer S."/>
        </authorList>
    </citation>
    <scope>NUCLEOTIDE SEQUENCE [LARGE SCALE GENOMIC DNA]</scope>
    <source>
        <strain>SC5314 / ATCC MYA-2876</strain>
    </source>
</reference>
<reference key="2">
    <citation type="journal article" date="2007" name="Genome Biol.">
        <title>Assembly of the Candida albicans genome into sixteen supercontigs aligned on the eight chromosomes.</title>
        <authorList>
            <person name="van het Hoog M."/>
            <person name="Rast T.J."/>
            <person name="Martchenko M."/>
            <person name="Grindle S."/>
            <person name="Dignard D."/>
            <person name="Hogues H."/>
            <person name="Cuomo C."/>
            <person name="Berriman M."/>
            <person name="Scherer S."/>
            <person name="Magee B.B."/>
            <person name="Whiteway M."/>
            <person name="Chibana H."/>
            <person name="Nantel A."/>
            <person name="Magee P.T."/>
        </authorList>
    </citation>
    <scope>GENOME REANNOTATION</scope>
    <source>
        <strain>SC5314 / ATCC MYA-2876</strain>
    </source>
</reference>
<reference key="3">
    <citation type="journal article" date="2013" name="Genome Biol.">
        <title>Assembly of a phased diploid Candida albicans genome facilitates allele-specific measurements and provides a simple model for repeat and indel structure.</title>
        <authorList>
            <person name="Muzzey D."/>
            <person name="Schwartz K."/>
            <person name="Weissman J.S."/>
            <person name="Sherlock G."/>
        </authorList>
    </citation>
    <scope>NUCLEOTIDE SEQUENCE [LARGE SCALE GENOMIC DNA]</scope>
    <scope>GENOME REANNOTATION</scope>
    <source>
        <strain>SC5314 / ATCC MYA-2876</strain>
    </source>
</reference>
<reference key="4">
    <citation type="journal article" date="2007" name="Mol. Cell. Proteomics">
        <title>Integrated proteomics and genomics strategies bring new insight into Candida albicans response upon macrophage interaction.</title>
        <authorList>
            <person name="Fernandez-Arenas E."/>
            <person name="Cabezon V."/>
            <person name="Bermejo C."/>
            <person name="Arroyo J."/>
            <person name="Nombela C."/>
            <person name="Diez-Orejas R."/>
            <person name="Gil C."/>
        </authorList>
    </citation>
    <scope>INDUCTION</scope>
</reference>
<reference key="5">
    <citation type="journal article" date="2012" name="Mycopathologia">
        <title>Deletion of the Candida albicans PIR32 results in increased virulence, stress response, and upregulation of cell wall chitin deposition.</title>
        <authorList>
            <person name="Bahnan W."/>
            <person name="Koussa J."/>
            <person name="Younes S."/>
            <person name="Abi Rizk M."/>
            <person name="Khalil B."/>
            <person name="El Sitt S."/>
            <person name="Hanna S."/>
            <person name="El-Sibai M."/>
            <person name="Khalaf R.A."/>
        </authorList>
    </citation>
    <scope>FUNCTION</scope>
    <scope>DISRUPTION PHENOTYPE</scope>
</reference>
<keyword id="KW-0134">Cell wall</keyword>
<keyword id="KW-0175">Coiled coil</keyword>
<keyword id="KW-0325">Glycoprotein</keyword>
<keyword id="KW-1185">Reference proteome</keyword>
<keyword id="KW-0964">Secreted</keyword>
<keyword id="KW-0732">Signal</keyword>
<feature type="signal peptide" evidence="2">
    <location>
        <begin position="1"/>
        <end position="21"/>
    </location>
</feature>
<feature type="chain" id="PRO_0000428630" description="Probable cell wall mannoprotein PIR32">
    <location>
        <begin position="22"/>
        <end position="422"/>
    </location>
</feature>
<feature type="region of interest" description="Disordered" evidence="4">
    <location>
        <begin position="116"/>
        <end position="143"/>
    </location>
</feature>
<feature type="region of interest" description="Disordered" evidence="4">
    <location>
        <begin position="155"/>
        <end position="313"/>
    </location>
</feature>
<feature type="coiled-coil region" evidence="2">
    <location>
        <begin position="179"/>
        <end position="214"/>
    </location>
</feature>
<feature type="compositionally biased region" description="Acidic residues" evidence="4">
    <location>
        <begin position="133"/>
        <end position="143"/>
    </location>
</feature>
<feature type="compositionally biased region" description="Polar residues" evidence="4">
    <location>
        <begin position="158"/>
        <end position="169"/>
    </location>
</feature>
<feature type="compositionally biased region" description="Low complexity" evidence="4">
    <location>
        <begin position="180"/>
        <end position="189"/>
    </location>
</feature>
<feature type="compositionally biased region" description="Low complexity" evidence="4">
    <location>
        <begin position="198"/>
        <end position="209"/>
    </location>
</feature>
<feature type="compositionally biased region" description="Acidic residues" evidence="4">
    <location>
        <begin position="220"/>
        <end position="231"/>
    </location>
</feature>
<feature type="compositionally biased region" description="Basic residues" evidence="4">
    <location>
        <begin position="238"/>
        <end position="248"/>
    </location>
</feature>
<feature type="compositionally biased region" description="Basic and acidic residues" evidence="4">
    <location>
        <begin position="249"/>
        <end position="284"/>
    </location>
</feature>
<feature type="compositionally biased region" description="Basic and acidic residues" evidence="4">
    <location>
        <begin position="300"/>
        <end position="311"/>
    </location>
</feature>
<feature type="glycosylation site" description="N-linked (GlcNAc...) asparagine" evidence="3">
    <location>
        <position position="206"/>
    </location>
</feature>
<feature type="glycosylation site" description="N-linked (GlcNAc...) asparagine" evidence="3">
    <location>
        <position position="232"/>
    </location>
</feature>
<feature type="glycosylation site" description="N-linked (GlcNAc...) asparagine" evidence="3">
    <location>
        <position position="237"/>
    </location>
</feature>
<feature type="glycosylation site" description="N-linked (GlcNAc...) asparagine" evidence="3">
    <location>
        <position position="328"/>
    </location>
</feature>
<dbReference type="EMBL" id="CP017623">
    <property type="protein sequence ID" value="AOW26409.1"/>
    <property type="molecule type" value="Genomic_DNA"/>
</dbReference>
<dbReference type="RefSeq" id="XP_711725.2">
    <property type="nucleotide sequence ID" value="XM_706633.2"/>
</dbReference>
<dbReference type="STRING" id="237561.Q59PW0"/>
<dbReference type="GlyCosmos" id="Q59PW0">
    <property type="glycosylation" value="4 sites, No reported glycans"/>
</dbReference>
<dbReference type="EnsemblFungi" id="C1_07620C_A-T">
    <property type="protein sequence ID" value="C1_07620C_A-T-p1"/>
    <property type="gene ID" value="C1_07620C_A"/>
</dbReference>
<dbReference type="GeneID" id="3646670"/>
<dbReference type="KEGG" id="cal:CAALFM_C107620CA"/>
<dbReference type="CGD" id="CAL0000195669">
    <property type="gene designation" value="PIR32"/>
</dbReference>
<dbReference type="VEuPathDB" id="FungiDB:C1_07620C_A"/>
<dbReference type="eggNOG" id="ENOG502QQD8">
    <property type="taxonomic scope" value="Eukaryota"/>
</dbReference>
<dbReference type="HOGENOM" id="CLU_689094_0_0_1"/>
<dbReference type="InParanoid" id="Q59PW0"/>
<dbReference type="OrthoDB" id="5415592at2759"/>
<dbReference type="PHI-base" id="PHI:2597"/>
<dbReference type="PRO" id="PR:Q59PW0"/>
<dbReference type="Proteomes" id="UP000000559">
    <property type="component" value="Chromosome 1"/>
</dbReference>
<dbReference type="GO" id="GO:0005576">
    <property type="term" value="C:extracellular region"/>
    <property type="evidence" value="ECO:0007669"/>
    <property type="project" value="UniProtKB-KW"/>
</dbReference>
<dbReference type="GO" id="GO:0009277">
    <property type="term" value="C:fungal-type cell wall"/>
    <property type="evidence" value="ECO:0000318"/>
    <property type="project" value="GO_Central"/>
</dbReference>
<dbReference type="GO" id="GO:0005199">
    <property type="term" value="F:structural constituent of cell wall"/>
    <property type="evidence" value="ECO:0000318"/>
    <property type="project" value="GO_Central"/>
</dbReference>
<dbReference type="GO" id="GO:0030447">
    <property type="term" value="P:filamentous growth"/>
    <property type="evidence" value="ECO:0000315"/>
    <property type="project" value="CGD"/>
</dbReference>
<dbReference type="GO" id="GO:0031505">
    <property type="term" value="P:fungal-type cell wall organization"/>
    <property type="evidence" value="ECO:0000315"/>
    <property type="project" value="CGD"/>
</dbReference>
<dbReference type="InterPro" id="IPR054508">
    <property type="entry name" value="PIR1-like_C"/>
</dbReference>
<dbReference type="InterPro" id="IPR051153">
    <property type="entry name" value="Yeast_CWMannoprotein_PIR"/>
</dbReference>
<dbReference type="PANTHER" id="PTHR47254">
    <property type="entry name" value="CELL WALL MANNOPROTEIN CIS3-RELATED"/>
    <property type="match status" value="1"/>
</dbReference>
<dbReference type="PANTHER" id="PTHR47254:SF1">
    <property type="entry name" value="CELL WALL MANNOPROTEIN CIS3-RELATED"/>
    <property type="match status" value="1"/>
</dbReference>
<dbReference type="Pfam" id="PF22799">
    <property type="entry name" value="PIR1-like_C"/>
    <property type="match status" value="1"/>
</dbReference>
<name>PIR32_CANAL</name>
<evidence type="ECO:0000250" key="1"/>
<evidence type="ECO:0000255" key="2"/>
<evidence type="ECO:0000255" key="3">
    <source>
        <dbReference type="PROSITE-ProRule" id="PRU00498"/>
    </source>
</evidence>
<evidence type="ECO:0000256" key="4">
    <source>
        <dbReference type="SAM" id="MobiDB-lite"/>
    </source>
</evidence>
<evidence type="ECO:0000269" key="5">
    <source>
    </source>
</evidence>
<evidence type="ECO:0000269" key="6">
    <source>
    </source>
</evidence>
<evidence type="ECO:0000305" key="7"/>
<comment type="function">
    <text evidence="6">Probable structural component of the cell wall involved in cell wall integrity and virulence.</text>
</comment>
<comment type="subcellular location">
    <subcellularLocation>
        <location evidence="7">Secreted</location>
        <location evidence="7">Cell wall</location>
    </subcellularLocation>
</comment>
<comment type="induction">
    <text evidence="5">Expression is induced by host macrophages.</text>
</comment>
<comment type="PTM">
    <text evidence="1">O-glycosylated. Extensively O-mannosylated.</text>
</comment>
<comment type="disruption phenotype">
    <text evidence="6">Leads to increased chitin content in the cell wall, hyperfilamentation, and resistance to sodium dodecyl sulfate, hydrogen peroxide, and sodium chloride. Also shows an increased virulence in a mouse model.</text>
</comment>
<comment type="similarity">
    <text evidence="7">Belongs to the PIR protein family.</text>
</comment>
<proteinExistence type="evidence at transcript level"/>
<accession>Q59PW0</accession>
<accession>A0A1D8PE52</accession>
<protein>
    <recommendedName>
        <fullName>Probable cell wall mannoprotein PIR32</fullName>
    </recommendedName>
</protein>
<sequence length="422" mass="48491">MIHYLIFPILLIFFQIIKSSGYYVPANGDDWTILKPPSCKNKLPGQYIDSLPFTFGIVVNPYILNEDGDYEKPIVSKIKPSLTTTTFVTSIITTSTATAPGSKPTKTKDIIVQIHDGQVQKMKHKHDYSSGGGDDDDDDEDCFDEKNIDMAAKRDYQDMNTQEQANEDSGQVLAESDSHQQVVDQNQQINEEEEETQEQQMQEENNNTNEIEDNKVQEFETIEEIYDDIDNNESRPNNSKKYHKKRPHNNYENKHGHKDYHEDHHHNHRYKDHENGHEEDDHKWNKPKPMPEQEEQEQEQEQKPKHEKSEGYESEFVSPVYSVACYTNSTLKMTLTDGILRDSDDRIGCIVSGHQFQFDGPTPQHGAIYAAGWSVTKQGQLALGDSTKFYQCASGDFYNLYDEPIAFQCHPVTLDVVELIEC</sequence>
<gene>
    <name type="primary">PIR32</name>
    <name type="synonym">PIR3</name>
    <name type="ordered locus">CAALFM_C107620CA</name>
    <name type="ORF">CaO19.10299</name>
    <name type="ORF">CaO19.2783</name>
</gene>
<organism>
    <name type="scientific">Candida albicans (strain SC5314 / ATCC MYA-2876)</name>
    <name type="common">Yeast</name>
    <dbReference type="NCBI Taxonomy" id="237561"/>
    <lineage>
        <taxon>Eukaryota</taxon>
        <taxon>Fungi</taxon>
        <taxon>Dikarya</taxon>
        <taxon>Ascomycota</taxon>
        <taxon>Saccharomycotina</taxon>
        <taxon>Pichiomycetes</taxon>
        <taxon>Debaryomycetaceae</taxon>
        <taxon>Candida/Lodderomyces clade</taxon>
        <taxon>Candida</taxon>
    </lineage>
</organism>